<organism>
    <name type="scientific">Pyrobaculum aerophilum (strain ATCC 51768 / DSM 7523 / JCM 9630 / CIP 104966 / NBRC 100827 / IM2)</name>
    <dbReference type="NCBI Taxonomy" id="178306"/>
    <lineage>
        <taxon>Archaea</taxon>
        <taxon>Thermoproteota</taxon>
        <taxon>Thermoprotei</taxon>
        <taxon>Thermoproteales</taxon>
        <taxon>Thermoproteaceae</taxon>
        <taxon>Pyrobaculum</taxon>
    </lineage>
</organism>
<protein>
    <recommendedName>
        <fullName evidence="1">Leucine--tRNA ligase</fullName>
        <ecNumber evidence="1">6.1.1.4</ecNumber>
    </recommendedName>
    <alternativeName>
        <fullName evidence="1">Leucyl-tRNA synthetase</fullName>
        <shortName evidence="1">LeuRS</shortName>
    </alternativeName>
</protein>
<proteinExistence type="inferred from homology"/>
<evidence type="ECO:0000255" key="1">
    <source>
        <dbReference type="HAMAP-Rule" id="MF_00049"/>
    </source>
</evidence>
<keyword id="KW-0030">Aminoacyl-tRNA synthetase</keyword>
<keyword id="KW-0067">ATP-binding</keyword>
<keyword id="KW-0963">Cytoplasm</keyword>
<keyword id="KW-0436">Ligase</keyword>
<keyword id="KW-0547">Nucleotide-binding</keyword>
<keyword id="KW-0648">Protein biosynthesis</keyword>
<keyword id="KW-1185">Reference proteome</keyword>
<sequence>MSELSSLFIKMAEKWQAKWAEARVYEPEPRPGAAKFFVTAAYPYPNGAIHIGHGRTYLIADVLARFHRHMGRVVLFPMGFHYTGTPILTIAEAIASGDATVIEEYMAIYGVPKDEIEKMGNPLYLARYFHEQSKRAMQKFGLGIDWTREFTTIDPEYQRFIQWQFEKLRERGLIVRGRHPVGWCPRHSMPVGAHDTKDDKEPEIGQWTLIYFADGEGLVFPAATLRPETVLGVTNMWINPDAEYAVIEHNGRKMVVSKDAAFRLSFQGDVRILREARGREFVGRSVQNPVTGEWVPVYEAKFVDPKVGTGVVMSVPAHAPYDYAALRDLNAVRLIPLIRVEGYGDYPAKEVVERMGIKSQTDPALEEATREVYSAEYTKGVMREDVVGRVGAHLSEPARSMLRAVFKMYFAGRPVREAREFISKWLVEAGIGGVMYDIMNKPVYCRCGTEIVVKVLEDQWFINYGEGRWKELARKLVEEMAIVPPEAKAHFLATIDWLDKRACARTRGLGTPLPWSDGWVIESLSDSTIYMAFYTVIKRIRQFGIKPEQLIKEFWDYVFLGVGTPEEVAKRTGVPPEQLKAIREEFDFWYPLDSRNSGKDLIPNHLTFFIFNHVAIFPREKWPRQIVANGWVLREGEKMSKSKRNVLPLDKAVDMYGPDPLRATLAITAEVEQDLDFRHAEAIRNAQQLMSIYSLAQRLAQTAEDRSPNWLDKWLVSEIALVLERAREAYEKVRVRQAAVEVLYNAKSVFDQYLASVERPSKLAVEAARAWAVAMEPIAPHLAEEIWSILGGEGLVVKAPWPQLRPDPVALLAKRYVDMVIDDVKRIPAFGEGVKRVVIYVNPNYAWVKAALSGDVKAVINAGAPPQAAKRVVDIVKTLGDELRGLISAVGKFDEAEALASYKNYMEKALGAPMEIYNADDPSAPDLGSKKKVALPLRPGIYIEK</sequence>
<gene>
    <name evidence="1" type="primary">leuS</name>
    <name type="ordered locus">PAE1107</name>
</gene>
<comment type="catalytic activity">
    <reaction evidence="1">
        <text>tRNA(Leu) + L-leucine + ATP = L-leucyl-tRNA(Leu) + AMP + diphosphate</text>
        <dbReference type="Rhea" id="RHEA:11688"/>
        <dbReference type="Rhea" id="RHEA-COMP:9613"/>
        <dbReference type="Rhea" id="RHEA-COMP:9622"/>
        <dbReference type="ChEBI" id="CHEBI:30616"/>
        <dbReference type="ChEBI" id="CHEBI:33019"/>
        <dbReference type="ChEBI" id="CHEBI:57427"/>
        <dbReference type="ChEBI" id="CHEBI:78442"/>
        <dbReference type="ChEBI" id="CHEBI:78494"/>
        <dbReference type="ChEBI" id="CHEBI:456215"/>
        <dbReference type="EC" id="6.1.1.4"/>
    </reaction>
</comment>
<comment type="subcellular location">
    <subcellularLocation>
        <location evidence="1">Cytoplasm</location>
    </subcellularLocation>
</comment>
<comment type="similarity">
    <text evidence="1">Belongs to the class-I aminoacyl-tRNA synthetase family.</text>
</comment>
<feature type="chain" id="PRO_0000152138" description="Leucine--tRNA ligase">
    <location>
        <begin position="1"/>
        <end position="945"/>
    </location>
</feature>
<feature type="short sequence motif" description="'HIGH' region">
    <location>
        <begin position="43"/>
        <end position="53"/>
    </location>
</feature>
<feature type="short sequence motif" description="'KMSKS' region">
    <location>
        <begin position="638"/>
        <end position="642"/>
    </location>
</feature>
<feature type="binding site" evidence="1">
    <location>
        <position position="641"/>
    </location>
    <ligand>
        <name>ATP</name>
        <dbReference type="ChEBI" id="CHEBI:30616"/>
    </ligand>
</feature>
<reference key="1">
    <citation type="journal article" date="2002" name="Proc. Natl. Acad. Sci. U.S.A.">
        <title>Genome sequence of the hyperthermophilic crenarchaeon Pyrobaculum aerophilum.</title>
        <authorList>
            <person name="Fitz-Gibbon S.T."/>
            <person name="Ladner H."/>
            <person name="Kim U.-J."/>
            <person name="Stetter K.O."/>
            <person name="Simon M.I."/>
            <person name="Miller J.H."/>
        </authorList>
    </citation>
    <scope>NUCLEOTIDE SEQUENCE [LARGE SCALE GENOMIC DNA]</scope>
    <source>
        <strain>ATCC 51768 / DSM 7523 / JCM 9630 / CIP 104966 / NBRC 100827 / IM2</strain>
    </source>
</reference>
<dbReference type="EC" id="6.1.1.4" evidence="1"/>
<dbReference type="EMBL" id="AE009441">
    <property type="protein sequence ID" value="AAL63260.1"/>
    <property type="molecule type" value="Genomic_DNA"/>
</dbReference>
<dbReference type="RefSeq" id="WP_011007732.1">
    <property type="nucleotide sequence ID" value="NC_003364.1"/>
</dbReference>
<dbReference type="SMR" id="Q8ZXT6"/>
<dbReference type="FunCoup" id="Q8ZXT6">
    <property type="interactions" value="239"/>
</dbReference>
<dbReference type="STRING" id="178306.PAE1107"/>
<dbReference type="EnsemblBacteria" id="AAL63260">
    <property type="protein sequence ID" value="AAL63260"/>
    <property type="gene ID" value="PAE1107"/>
</dbReference>
<dbReference type="GeneID" id="1465496"/>
<dbReference type="KEGG" id="pai:PAE1107"/>
<dbReference type="PATRIC" id="fig|178306.9.peg.821"/>
<dbReference type="eggNOG" id="arCOG00809">
    <property type="taxonomic scope" value="Archaea"/>
</dbReference>
<dbReference type="HOGENOM" id="CLU_004174_0_0_2"/>
<dbReference type="InParanoid" id="Q8ZXT6"/>
<dbReference type="Proteomes" id="UP000002439">
    <property type="component" value="Chromosome"/>
</dbReference>
<dbReference type="GO" id="GO:0005737">
    <property type="term" value="C:cytoplasm"/>
    <property type="evidence" value="ECO:0007669"/>
    <property type="project" value="UniProtKB-SubCell"/>
</dbReference>
<dbReference type="GO" id="GO:0002161">
    <property type="term" value="F:aminoacyl-tRNA deacylase activity"/>
    <property type="evidence" value="ECO:0007669"/>
    <property type="project" value="InterPro"/>
</dbReference>
<dbReference type="GO" id="GO:0005524">
    <property type="term" value="F:ATP binding"/>
    <property type="evidence" value="ECO:0007669"/>
    <property type="project" value="UniProtKB-UniRule"/>
</dbReference>
<dbReference type="GO" id="GO:0004823">
    <property type="term" value="F:leucine-tRNA ligase activity"/>
    <property type="evidence" value="ECO:0000318"/>
    <property type="project" value="GO_Central"/>
</dbReference>
<dbReference type="GO" id="GO:0006429">
    <property type="term" value="P:leucyl-tRNA aminoacylation"/>
    <property type="evidence" value="ECO:0000318"/>
    <property type="project" value="GO_Central"/>
</dbReference>
<dbReference type="FunFam" id="3.90.740.10:FF:000024">
    <property type="entry name" value="Leucine--tRNA ligase"/>
    <property type="match status" value="1"/>
</dbReference>
<dbReference type="Gene3D" id="3.30.2320.20">
    <property type="entry name" value="Class I aminoacyl-tRNA synthetases (RS)"/>
    <property type="match status" value="1"/>
</dbReference>
<dbReference type="Gene3D" id="3.40.50.620">
    <property type="entry name" value="HUPs"/>
    <property type="match status" value="1"/>
</dbReference>
<dbReference type="Gene3D" id="1.10.730.10">
    <property type="entry name" value="Isoleucyl-tRNA Synthetase, Domain 1"/>
    <property type="match status" value="1"/>
</dbReference>
<dbReference type="Gene3D" id="1.10.10.720">
    <property type="entry name" value="leucyl-tRNA synthetase"/>
    <property type="match status" value="1"/>
</dbReference>
<dbReference type="Gene3D" id="3.90.740.10">
    <property type="entry name" value="Valyl/Leucyl/Isoleucyl-tRNA synthetase, editing domain"/>
    <property type="match status" value="1"/>
</dbReference>
<dbReference type="HAMAP" id="MF_00049_A">
    <property type="entry name" value="Leu_tRNA_synth_A"/>
    <property type="match status" value="1"/>
</dbReference>
<dbReference type="InterPro" id="IPR001412">
    <property type="entry name" value="aa-tRNA-synth_I_CS"/>
</dbReference>
<dbReference type="InterPro" id="IPR002300">
    <property type="entry name" value="aa-tRNA-synth_Ia"/>
</dbReference>
<dbReference type="InterPro" id="IPR020791">
    <property type="entry name" value="Leu-tRNA-lgase_arc"/>
</dbReference>
<dbReference type="InterPro" id="IPR004493">
    <property type="entry name" value="Leu-tRNA-synth_Ia_arc/euk"/>
</dbReference>
<dbReference type="InterPro" id="IPR013155">
    <property type="entry name" value="M/V/L/I-tRNA-synth_anticd-bd"/>
</dbReference>
<dbReference type="InterPro" id="IPR015413">
    <property type="entry name" value="Methionyl/Leucyl_tRNA_Synth"/>
</dbReference>
<dbReference type="InterPro" id="IPR014729">
    <property type="entry name" value="Rossmann-like_a/b/a_fold"/>
</dbReference>
<dbReference type="InterPro" id="IPR009080">
    <property type="entry name" value="tRNAsynth_Ia_anticodon-bd"/>
</dbReference>
<dbReference type="InterPro" id="IPR009008">
    <property type="entry name" value="Val/Leu/Ile-tRNA-synth_edit"/>
</dbReference>
<dbReference type="NCBIfam" id="TIGR00395">
    <property type="entry name" value="leuS_arch"/>
    <property type="match status" value="1"/>
</dbReference>
<dbReference type="NCBIfam" id="NF008957">
    <property type="entry name" value="PRK12300.1"/>
    <property type="match status" value="1"/>
</dbReference>
<dbReference type="PANTHER" id="PTHR45794:SF1">
    <property type="entry name" value="LEUCINE--TRNA LIGASE, CYTOPLASMIC"/>
    <property type="match status" value="1"/>
</dbReference>
<dbReference type="PANTHER" id="PTHR45794">
    <property type="entry name" value="LEUCYL-TRNA SYNTHETASE"/>
    <property type="match status" value="1"/>
</dbReference>
<dbReference type="Pfam" id="PF08264">
    <property type="entry name" value="Anticodon_1"/>
    <property type="match status" value="1"/>
</dbReference>
<dbReference type="Pfam" id="PF00133">
    <property type="entry name" value="tRNA-synt_1"/>
    <property type="match status" value="1"/>
</dbReference>
<dbReference type="Pfam" id="PF09334">
    <property type="entry name" value="tRNA-synt_1g"/>
    <property type="match status" value="1"/>
</dbReference>
<dbReference type="SUPFAM" id="SSF47323">
    <property type="entry name" value="Anticodon-binding domain of a subclass of class I aminoacyl-tRNA synthetases"/>
    <property type="match status" value="1"/>
</dbReference>
<dbReference type="SUPFAM" id="SSF52374">
    <property type="entry name" value="Nucleotidylyl transferase"/>
    <property type="match status" value="1"/>
</dbReference>
<dbReference type="SUPFAM" id="SSF50677">
    <property type="entry name" value="ValRS/IleRS/LeuRS editing domain"/>
    <property type="match status" value="1"/>
</dbReference>
<dbReference type="PROSITE" id="PS00178">
    <property type="entry name" value="AA_TRNA_LIGASE_I"/>
    <property type="match status" value="1"/>
</dbReference>
<accession>Q8ZXT6</accession>
<name>SYL_PYRAE</name>